<name>GL31_ARATH</name>
<comment type="function">
    <text>May play a role in plant defense. Probably has no oxalate oxidase activity even if the active site is conserved.</text>
</comment>
<comment type="subunit">
    <text>May not form oligomer.</text>
</comment>
<comment type="subcellular location">
    <subcellularLocation>
        <location evidence="1">Secreted</location>
        <location evidence="1">Extracellular space</location>
        <location evidence="1">Apoplast</location>
    </subcellularLocation>
</comment>
<comment type="tissue specificity">
    <text>Expressed during germination, and also in green shoots, etiolated seedlings and whole seedlings.</text>
</comment>
<comment type="miscellaneous">
    <text>Is the most highly expressed of the GLP genes.</text>
</comment>
<comment type="similarity">
    <text evidence="3">Belongs to the germin family.</text>
</comment>
<organism>
    <name type="scientific">Arabidopsis thaliana</name>
    <name type="common">Mouse-ear cress</name>
    <dbReference type="NCBI Taxonomy" id="3702"/>
    <lineage>
        <taxon>Eukaryota</taxon>
        <taxon>Viridiplantae</taxon>
        <taxon>Streptophyta</taxon>
        <taxon>Embryophyta</taxon>
        <taxon>Tracheophyta</taxon>
        <taxon>Spermatophyta</taxon>
        <taxon>Magnoliopsida</taxon>
        <taxon>eudicotyledons</taxon>
        <taxon>Gunneridae</taxon>
        <taxon>Pentapetalae</taxon>
        <taxon>rosids</taxon>
        <taxon>malvids</taxon>
        <taxon>Brassicales</taxon>
        <taxon>Brassicaceae</taxon>
        <taxon>Camelineae</taxon>
        <taxon>Arabidopsis</taxon>
    </lineage>
</organism>
<sequence>MLRTIFLLSLLFALSNASVQDFCVANLKRAETPAGYPCIRPIHVKATDFVFSGLGTPGNTTNIINAAVTPAFAAQFPGLNGLGLSTARLDLAPKGVIPMHTHPGASEVLFVLTGSITAGFVSSANAVYVQTLKPGQVMVFPQGLLHFQINAGKSSASAVVTFNSANPGLQILDFALFANSLPTELVVGTTFLDATTVKKLKGVLGGTG</sequence>
<evidence type="ECO:0000250" key="1"/>
<evidence type="ECO:0000255" key="2"/>
<evidence type="ECO:0000305" key="3"/>
<protein>
    <recommendedName>
        <fullName>Germin-like protein subfamily 3 member 1</fullName>
        <shortName>At-GERM1</shortName>
        <shortName>AtGER1</shortName>
        <shortName>AtGLP1</shortName>
    </recommendedName>
</protein>
<feature type="signal peptide" evidence="2">
    <location>
        <begin position="1"/>
        <end position="18"/>
    </location>
</feature>
<feature type="chain" id="PRO_0000010826" description="Germin-like protein subfamily 3 member 1">
    <location>
        <begin position="19"/>
        <end position="208"/>
    </location>
</feature>
<feature type="domain" description="Cupin type-1" evidence="2">
    <location>
        <begin position="52"/>
        <end position="198"/>
    </location>
</feature>
<feature type="binding site" evidence="1">
    <location>
        <position position="100"/>
    </location>
    <ligand>
        <name>Mn(2+)</name>
        <dbReference type="ChEBI" id="CHEBI:29035"/>
    </ligand>
</feature>
<feature type="binding site" evidence="1">
    <location>
        <position position="102"/>
    </location>
    <ligand>
        <name>Mn(2+)</name>
        <dbReference type="ChEBI" id="CHEBI:29035"/>
    </ligand>
</feature>
<feature type="binding site" evidence="1">
    <location>
        <position position="107"/>
    </location>
    <ligand>
        <name>Mn(2+)</name>
        <dbReference type="ChEBI" id="CHEBI:29035"/>
    </ligand>
</feature>
<feature type="binding site" evidence="1">
    <location>
        <position position="146"/>
    </location>
    <ligand>
        <name>Mn(2+)</name>
        <dbReference type="ChEBI" id="CHEBI:29035"/>
    </ligand>
</feature>
<feature type="glycosylation site" description="N-linked (GlcNAc...) asparagine" evidence="2">
    <location>
        <position position="59"/>
    </location>
</feature>
<feature type="disulfide bond" evidence="1">
    <location>
        <begin position="23"/>
        <end position="38"/>
    </location>
</feature>
<feature type="sequence conflict" description="In Ref. 1; CAA63014." evidence="3" ref="1">
    <original>A</original>
    <variation>G</variation>
    <location>
        <position position="13"/>
    </location>
</feature>
<feature type="sequence conflict" description="In Ref. 1; CAA63014." evidence="3" ref="1">
    <original>G</original>
    <variation>A</variation>
    <location>
        <position position="83"/>
    </location>
</feature>
<feature type="sequence conflict" description="In Ref. 1; CAA63014." evidence="3" ref="1">
    <original>P</original>
    <variation>R</variation>
    <location>
        <position position="167"/>
    </location>
</feature>
<dbReference type="EMBL" id="X91921">
    <property type="protein sequence ID" value="CAA63014.1"/>
    <property type="molecule type" value="mRNA"/>
</dbReference>
<dbReference type="EMBL" id="D89055">
    <property type="protein sequence ID" value="BAA77207.1"/>
    <property type="molecule type" value="Genomic_DNA"/>
</dbReference>
<dbReference type="EMBL" id="AF090733">
    <property type="protein sequence ID" value="AAD05223.1"/>
    <property type="molecule type" value="Genomic_DNA"/>
</dbReference>
<dbReference type="EMBL" id="U75189">
    <property type="protein sequence ID" value="AAB51567.1"/>
    <property type="molecule type" value="mRNA"/>
</dbReference>
<dbReference type="EMBL" id="U75190">
    <property type="protein sequence ID" value="AAB51568.1"/>
    <property type="molecule type" value="mRNA"/>
</dbReference>
<dbReference type="EMBL" id="U75196">
    <property type="protein sequence ID" value="AAB51574.1"/>
    <property type="molecule type" value="mRNA"/>
</dbReference>
<dbReference type="EMBL" id="U75197">
    <property type="protein sequence ID" value="AAB51575.1"/>
    <property type="molecule type" value="mRNA"/>
</dbReference>
<dbReference type="EMBL" id="U75201">
    <property type="protein sequence ID" value="AAB51579.1"/>
    <property type="molecule type" value="mRNA"/>
</dbReference>
<dbReference type="EMBL" id="U75206">
    <property type="protein sequence ID" value="AAB51584.1"/>
    <property type="molecule type" value="mRNA"/>
</dbReference>
<dbReference type="EMBL" id="U95034">
    <property type="protein sequence ID" value="AAB51750.1"/>
    <property type="molecule type" value="mRNA"/>
</dbReference>
<dbReference type="EMBL" id="U95035">
    <property type="protein sequence ID" value="AAB51751.1"/>
    <property type="molecule type" value="mRNA"/>
</dbReference>
<dbReference type="EMBL" id="AC010926">
    <property type="protein sequence ID" value="AAG51848.1"/>
    <property type="molecule type" value="Genomic_DNA"/>
</dbReference>
<dbReference type="EMBL" id="CP002684">
    <property type="protein sequence ID" value="AEE35348.1"/>
    <property type="molecule type" value="Genomic_DNA"/>
</dbReference>
<dbReference type="EMBL" id="AY085951">
    <property type="protein sequence ID" value="AAM63161.1"/>
    <property type="molecule type" value="mRNA"/>
</dbReference>
<dbReference type="PIR" id="F96750">
    <property type="entry name" value="F96750"/>
</dbReference>
<dbReference type="RefSeq" id="NP_177405.1">
    <property type="nucleotide sequence ID" value="NM_105920.2"/>
</dbReference>
<dbReference type="SMR" id="P94040"/>
<dbReference type="FunCoup" id="P94040">
    <property type="interactions" value="309"/>
</dbReference>
<dbReference type="STRING" id="3702.P94040"/>
<dbReference type="GlyCosmos" id="P94040">
    <property type="glycosylation" value="1 site, No reported glycans"/>
</dbReference>
<dbReference type="GlyGen" id="P94040">
    <property type="glycosylation" value="2 sites"/>
</dbReference>
<dbReference type="PaxDb" id="3702-AT1G72610.1"/>
<dbReference type="ProteomicsDB" id="248573"/>
<dbReference type="EnsemblPlants" id="AT1G72610.1">
    <property type="protein sequence ID" value="AT1G72610.1"/>
    <property type="gene ID" value="AT1G72610"/>
</dbReference>
<dbReference type="GeneID" id="843593"/>
<dbReference type="Gramene" id="AT1G72610.1">
    <property type="protein sequence ID" value="AT1G72610.1"/>
    <property type="gene ID" value="AT1G72610"/>
</dbReference>
<dbReference type="KEGG" id="ath:AT1G72610"/>
<dbReference type="Araport" id="AT1G72610"/>
<dbReference type="TAIR" id="AT1G72610">
    <property type="gene designation" value="GER1"/>
</dbReference>
<dbReference type="eggNOG" id="ENOG502QT7C">
    <property type="taxonomic scope" value="Eukaryota"/>
</dbReference>
<dbReference type="HOGENOM" id="CLU_015790_0_2_1"/>
<dbReference type="InParanoid" id="P94040"/>
<dbReference type="OMA" id="GQVMIFP"/>
<dbReference type="OrthoDB" id="1921208at2759"/>
<dbReference type="PhylomeDB" id="P94040"/>
<dbReference type="PRO" id="PR:P94040"/>
<dbReference type="Proteomes" id="UP000006548">
    <property type="component" value="Chromosome 1"/>
</dbReference>
<dbReference type="ExpressionAtlas" id="P94040">
    <property type="expression patterns" value="baseline and differential"/>
</dbReference>
<dbReference type="GO" id="GO:0048046">
    <property type="term" value="C:apoplast"/>
    <property type="evidence" value="ECO:0007669"/>
    <property type="project" value="UniProtKB-SubCell"/>
</dbReference>
<dbReference type="GO" id="GO:0031012">
    <property type="term" value="C:extracellular matrix"/>
    <property type="evidence" value="ECO:0000314"/>
    <property type="project" value="TAIR"/>
</dbReference>
<dbReference type="GO" id="GO:0005739">
    <property type="term" value="C:mitochondrion"/>
    <property type="evidence" value="ECO:0007005"/>
    <property type="project" value="TAIR"/>
</dbReference>
<dbReference type="GO" id="GO:0030145">
    <property type="term" value="F:manganese ion binding"/>
    <property type="evidence" value="ECO:0007669"/>
    <property type="project" value="InterPro"/>
</dbReference>
<dbReference type="CDD" id="cd02241">
    <property type="entry name" value="cupin_OxOx"/>
    <property type="match status" value="1"/>
</dbReference>
<dbReference type="FunFam" id="2.60.120.10:FF:000047">
    <property type="entry name" value="Auxin-binding protein ABP19a"/>
    <property type="match status" value="1"/>
</dbReference>
<dbReference type="Gene3D" id="2.60.120.10">
    <property type="entry name" value="Jelly Rolls"/>
    <property type="match status" value="1"/>
</dbReference>
<dbReference type="InterPro" id="IPR006045">
    <property type="entry name" value="Cupin_1"/>
</dbReference>
<dbReference type="InterPro" id="IPR001929">
    <property type="entry name" value="Germin"/>
</dbReference>
<dbReference type="InterPro" id="IPR019780">
    <property type="entry name" value="Germin_Mn-BS"/>
</dbReference>
<dbReference type="InterPro" id="IPR014710">
    <property type="entry name" value="RmlC-like_jellyroll"/>
</dbReference>
<dbReference type="InterPro" id="IPR011051">
    <property type="entry name" value="RmlC_Cupin_sf"/>
</dbReference>
<dbReference type="PANTHER" id="PTHR31238">
    <property type="entry name" value="GERMIN-LIKE PROTEIN SUBFAMILY 3 MEMBER 3"/>
    <property type="match status" value="1"/>
</dbReference>
<dbReference type="Pfam" id="PF00190">
    <property type="entry name" value="Cupin_1"/>
    <property type="match status" value="1"/>
</dbReference>
<dbReference type="PRINTS" id="PR00325">
    <property type="entry name" value="GERMIN"/>
</dbReference>
<dbReference type="SMART" id="SM00835">
    <property type="entry name" value="Cupin_1"/>
    <property type="match status" value="1"/>
</dbReference>
<dbReference type="SUPFAM" id="SSF51182">
    <property type="entry name" value="RmlC-like cupins"/>
    <property type="match status" value="1"/>
</dbReference>
<dbReference type="PROSITE" id="PS00725">
    <property type="entry name" value="GERMIN"/>
    <property type="match status" value="1"/>
</dbReference>
<accession>P94040</accession>
<accession>O04751</accession>
<accession>Q96265</accession>
<keyword id="KW-0052">Apoplast</keyword>
<keyword id="KW-1015">Disulfide bond</keyword>
<keyword id="KW-0325">Glycoprotein</keyword>
<keyword id="KW-0464">Manganese</keyword>
<keyword id="KW-0479">Metal-binding</keyword>
<keyword id="KW-1185">Reference proteome</keyword>
<keyword id="KW-0964">Secreted</keyword>
<keyword id="KW-0732">Signal</keyword>
<proteinExistence type="evidence at protein level"/>
<reference key="1">
    <citation type="journal article" date="1997" name="Plant Mol. Biol.">
        <title>cDNA sequence, genomic organization and differential expression of three Arabidopsis genes for germin/oxalate oxidase-like proteins.</title>
        <authorList>
            <person name="Membre N."/>
            <person name="Berna A."/>
            <person name="Neutelings G."/>
            <person name="David A."/>
            <person name="David H."/>
            <person name="Staiger D."/>
            <person name="Saez Vasquez J."/>
            <person name="Raynal M."/>
            <person name="Delseny M."/>
            <person name="Bernier F."/>
        </authorList>
    </citation>
    <scope>NUCLEOTIDE SEQUENCE [MRNA]</scope>
    <source>
        <strain>cv. Columbia</strain>
        <tissue>Seedling</tissue>
    </source>
</reference>
<reference key="2">
    <citation type="journal article" date="1998" name="Plant Biotechnol.">
        <title>Molecular identification of two genes of germin-like protein in Arabidopsis.</title>
        <authorList>
            <person name="Sage-Ono K."/>
            <person name="Ono M."/>
            <person name="Oguchi T."/>
            <person name="Hasebe M."/>
            <person name="Xu Z.-J."/>
            <person name="Ueda K."/>
            <person name="Inoue M."/>
            <person name="Kamada H."/>
        </authorList>
    </citation>
    <scope>NUCLEOTIDE SEQUENCE [GENOMIC DNA]</scope>
    <source>
        <strain>cv. Landsberg erecta</strain>
    </source>
</reference>
<reference key="3">
    <citation type="online journal article" date="1998" name="Plant Gene Register">
        <title>Cloning and characterization of the Arabidopsis thaliana germin-like protein (GLP1) gene.</title>
        <authorList>
            <person name="Carter C."/>
            <person name="Thornburg R.W."/>
        </authorList>
        <locator>PGR98-183</locator>
    </citation>
    <scope>NUCLEOTIDE SEQUENCE [GENOMIC DNA]</scope>
    <source>
        <strain>cv. Landsberg erecta</strain>
    </source>
</reference>
<reference key="4">
    <citation type="journal article" date="1998" name="Plant Mol. Biol.">
        <title>Arabidopsis thaliana contains a large family of germin-like proteins: characterization of cDNA and genomic sequences encoding 12 unique family members.</title>
        <authorList>
            <person name="Carter C."/>
            <person name="Graham R.A."/>
            <person name="Thornburg R.W."/>
        </authorList>
    </citation>
    <scope>NUCLEOTIDE SEQUENCE [MRNA]</scope>
    <source>
        <strain>cv. Columbia</strain>
    </source>
</reference>
<reference key="5">
    <citation type="journal article" date="2000" name="Nature">
        <title>Sequence and analysis of chromosome 1 of the plant Arabidopsis thaliana.</title>
        <authorList>
            <person name="Theologis A."/>
            <person name="Ecker J.R."/>
            <person name="Palm C.J."/>
            <person name="Federspiel N.A."/>
            <person name="Kaul S."/>
            <person name="White O."/>
            <person name="Alonso J."/>
            <person name="Altafi H."/>
            <person name="Araujo R."/>
            <person name="Bowman C.L."/>
            <person name="Brooks S.Y."/>
            <person name="Buehler E."/>
            <person name="Chan A."/>
            <person name="Chao Q."/>
            <person name="Chen H."/>
            <person name="Cheuk R.F."/>
            <person name="Chin C.W."/>
            <person name="Chung M.K."/>
            <person name="Conn L."/>
            <person name="Conway A.B."/>
            <person name="Conway A.R."/>
            <person name="Creasy T.H."/>
            <person name="Dewar K."/>
            <person name="Dunn P."/>
            <person name="Etgu P."/>
            <person name="Feldblyum T.V."/>
            <person name="Feng J.-D."/>
            <person name="Fong B."/>
            <person name="Fujii C.Y."/>
            <person name="Gill J.E."/>
            <person name="Goldsmith A.D."/>
            <person name="Haas B."/>
            <person name="Hansen N.F."/>
            <person name="Hughes B."/>
            <person name="Huizar L."/>
            <person name="Hunter J.L."/>
            <person name="Jenkins J."/>
            <person name="Johnson-Hopson C."/>
            <person name="Khan S."/>
            <person name="Khaykin E."/>
            <person name="Kim C.J."/>
            <person name="Koo H.L."/>
            <person name="Kremenetskaia I."/>
            <person name="Kurtz D.B."/>
            <person name="Kwan A."/>
            <person name="Lam B."/>
            <person name="Langin-Hooper S."/>
            <person name="Lee A."/>
            <person name="Lee J.M."/>
            <person name="Lenz C.A."/>
            <person name="Li J.H."/>
            <person name="Li Y.-P."/>
            <person name="Lin X."/>
            <person name="Liu S.X."/>
            <person name="Liu Z.A."/>
            <person name="Luros J.S."/>
            <person name="Maiti R."/>
            <person name="Marziali A."/>
            <person name="Militscher J."/>
            <person name="Miranda M."/>
            <person name="Nguyen M."/>
            <person name="Nierman W.C."/>
            <person name="Osborne B.I."/>
            <person name="Pai G."/>
            <person name="Peterson J."/>
            <person name="Pham P.K."/>
            <person name="Rizzo M."/>
            <person name="Rooney T."/>
            <person name="Rowley D."/>
            <person name="Sakano H."/>
            <person name="Salzberg S.L."/>
            <person name="Schwartz J.R."/>
            <person name="Shinn P."/>
            <person name="Southwick A.M."/>
            <person name="Sun H."/>
            <person name="Tallon L.J."/>
            <person name="Tambunga G."/>
            <person name="Toriumi M.J."/>
            <person name="Town C.D."/>
            <person name="Utterback T."/>
            <person name="Van Aken S."/>
            <person name="Vaysberg M."/>
            <person name="Vysotskaia V.S."/>
            <person name="Walker M."/>
            <person name="Wu D."/>
            <person name="Yu G."/>
            <person name="Fraser C.M."/>
            <person name="Venter J.C."/>
            <person name="Davis R.W."/>
        </authorList>
    </citation>
    <scope>NUCLEOTIDE SEQUENCE [LARGE SCALE GENOMIC DNA]</scope>
    <source>
        <strain>cv. Columbia</strain>
    </source>
</reference>
<reference key="6">
    <citation type="journal article" date="2017" name="Plant J.">
        <title>Araport11: a complete reannotation of the Arabidopsis thaliana reference genome.</title>
        <authorList>
            <person name="Cheng C.Y."/>
            <person name="Krishnakumar V."/>
            <person name="Chan A.P."/>
            <person name="Thibaud-Nissen F."/>
            <person name="Schobel S."/>
            <person name="Town C.D."/>
        </authorList>
    </citation>
    <scope>GENOME REANNOTATION</scope>
    <source>
        <strain>cv. Columbia</strain>
    </source>
</reference>
<reference key="7">
    <citation type="submission" date="2002-03" db="EMBL/GenBank/DDBJ databases">
        <title>Full-length cDNA from Arabidopsis thaliana.</title>
        <authorList>
            <person name="Brover V.V."/>
            <person name="Troukhan M.E."/>
            <person name="Alexandrov N.A."/>
            <person name="Lu Y.-P."/>
            <person name="Flavell R.B."/>
            <person name="Feldmann K.A."/>
        </authorList>
    </citation>
    <scope>NUCLEOTIDE SEQUENCE [LARGE SCALE MRNA]</scope>
</reference>
<reference key="8">
    <citation type="journal article" date="2000" name="Planta">
        <title>Arabidopsis thaliana germin-like proteins: common and specific features point to a variety of functions.</title>
        <authorList>
            <person name="Membre N."/>
            <person name="Bernier F."/>
            <person name="Staiger D."/>
            <person name="Berna A."/>
        </authorList>
    </citation>
    <scope>CHARACTERIZATION</scope>
</reference>
<gene>
    <name type="primary">GLP1</name>
    <name type="synonym">GER1</name>
    <name type="synonym">GLP3</name>
    <name type="ordered locus">At1g72610</name>
    <name type="ORF">F28P22.20</name>
</gene>